<sequence length="319" mass="35873">MSEKTAVVLLQMGGPDSIAAVEPFLFNLFSDREIIKIGPALLQPFIARFICRRRAPKVEAYYEQIGGKSPIRELTEAQAKALETELGDGYRAFVAMRYWKPTTIDALAAIKREGISRVIALSLYPHYSRATAGSSINELKRVLGQAGVSFQVSYIDRFYDHPLYIKALAEKVEEGLSEFSDRSRVTLVFSAHSLPQSFIDDGDPYLSHIQATVRLVMERLGNIDYHLAFQSRAGPVKWLEPSTEEMMKRLATEGRKEMLMVPLSFVSDHIETLYEVDIQYAKEAKQLGIDKFRRSPSLNSSPLFIECLAELVKSVKGEG</sequence>
<protein>
    <recommendedName>
        <fullName evidence="1">Ferrochelatase</fullName>
        <ecNumber evidence="1">4.98.1.1</ecNumber>
    </recommendedName>
    <alternativeName>
        <fullName evidence="1">Heme synthase</fullName>
    </alternativeName>
    <alternativeName>
        <fullName evidence="1">Protoheme ferro-lyase</fullName>
    </alternativeName>
</protein>
<reference key="1">
    <citation type="submission" date="2009-01" db="EMBL/GenBank/DDBJ databases">
        <title>Complete sequence of Geobacter sp. FRC-32.</title>
        <authorList>
            <consortium name="US DOE Joint Genome Institute"/>
            <person name="Lucas S."/>
            <person name="Copeland A."/>
            <person name="Lapidus A."/>
            <person name="Glavina del Rio T."/>
            <person name="Dalin E."/>
            <person name="Tice H."/>
            <person name="Bruce D."/>
            <person name="Goodwin L."/>
            <person name="Pitluck S."/>
            <person name="Saunders E."/>
            <person name="Brettin T."/>
            <person name="Detter J.C."/>
            <person name="Han C."/>
            <person name="Larimer F."/>
            <person name="Land M."/>
            <person name="Hauser L."/>
            <person name="Kyrpides N."/>
            <person name="Ovchinnikova G."/>
            <person name="Kostka J."/>
            <person name="Richardson P."/>
        </authorList>
    </citation>
    <scope>NUCLEOTIDE SEQUENCE [LARGE SCALE GENOMIC DNA]</scope>
    <source>
        <strain>DSM 22248 / JCM 15807 / FRC-32</strain>
    </source>
</reference>
<dbReference type="EC" id="4.98.1.1" evidence="1"/>
<dbReference type="EMBL" id="CP001390">
    <property type="protein sequence ID" value="ACM19436.1"/>
    <property type="molecule type" value="Genomic_DNA"/>
</dbReference>
<dbReference type="RefSeq" id="WP_012646165.1">
    <property type="nucleotide sequence ID" value="NC_011979.1"/>
</dbReference>
<dbReference type="SMR" id="B9M326"/>
<dbReference type="STRING" id="316067.Geob_1076"/>
<dbReference type="KEGG" id="geo:Geob_1076"/>
<dbReference type="eggNOG" id="COG0276">
    <property type="taxonomic scope" value="Bacteria"/>
</dbReference>
<dbReference type="HOGENOM" id="CLU_018884_4_1_7"/>
<dbReference type="OrthoDB" id="9809741at2"/>
<dbReference type="UniPathway" id="UPA00252">
    <property type="reaction ID" value="UER00325"/>
</dbReference>
<dbReference type="Proteomes" id="UP000007721">
    <property type="component" value="Chromosome"/>
</dbReference>
<dbReference type="GO" id="GO:0005737">
    <property type="term" value="C:cytoplasm"/>
    <property type="evidence" value="ECO:0007669"/>
    <property type="project" value="UniProtKB-SubCell"/>
</dbReference>
<dbReference type="GO" id="GO:0004325">
    <property type="term" value="F:ferrochelatase activity"/>
    <property type="evidence" value="ECO:0007669"/>
    <property type="project" value="UniProtKB-UniRule"/>
</dbReference>
<dbReference type="GO" id="GO:0046872">
    <property type="term" value="F:metal ion binding"/>
    <property type="evidence" value="ECO:0007669"/>
    <property type="project" value="UniProtKB-KW"/>
</dbReference>
<dbReference type="GO" id="GO:0006783">
    <property type="term" value="P:heme biosynthetic process"/>
    <property type="evidence" value="ECO:0007669"/>
    <property type="project" value="UniProtKB-UniRule"/>
</dbReference>
<dbReference type="CDD" id="cd00419">
    <property type="entry name" value="Ferrochelatase_C"/>
    <property type="match status" value="1"/>
</dbReference>
<dbReference type="CDD" id="cd03411">
    <property type="entry name" value="Ferrochelatase_N"/>
    <property type="match status" value="1"/>
</dbReference>
<dbReference type="Gene3D" id="3.40.50.1400">
    <property type="match status" value="2"/>
</dbReference>
<dbReference type="HAMAP" id="MF_00323">
    <property type="entry name" value="Ferrochelatase"/>
    <property type="match status" value="1"/>
</dbReference>
<dbReference type="InterPro" id="IPR001015">
    <property type="entry name" value="Ferrochelatase"/>
</dbReference>
<dbReference type="InterPro" id="IPR019772">
    <property type="entry name" value="Ferrochelatase_AS"/>
</dbReference>
<dbReference type="InterPro" id="IPR033644">
    <property type="entry name" value="Ferrochelatase_C"/>
</dbReference>
<dbReference type="InterPro" id="IPR033659">
    <property type="entry name" value="Ferrochelatase_N"/>
</dbReference>
<dbReference type="NCBIfam" id="TIGR00109">
    <property type="entry name" value="hemH"/>
    <property type="match status" value="1"/>
</dbReference>
<dbReference type="PANTHER" id="PTHR11108">
    <property type="entry name" value="FERROCHELATASE"/>
    <property type="match status" value="1"/>
</dbReference>
<dbReference type="PANTHER" id="PTHR11108:SF1">
    <property type="entry name" value="FERROCHELATASE, MITOCHONDRIAL"/>
    <property type="match status" value="1"/>
</dbReference>
<dbReference type="Pfam" id="PF00762">
    <property type="entry name" value="Ferrochelatase"/>
    <property type="match status" value="1"/>
</dbReference>
<dbReference type="SUPFAM" id="SSF53800">
    <property type="entry name" value="Chelatase"/>
    <property type="match status" value="1"/>
</dbReference>
<dbReference type="PROSITE" id="PS00534">
    <property type="entry name" value="FERROCHELATASE"/>
    <property type="match status" value="1"/>
</dbReference>
<comment type="function">
    <text evidence="1">Catalyzes the ferrous insertion into protoporphyrin IX.</text>
</comment>
<comment type="catalytic activity">
    <reaction evidence="1">
        <text>heme b + 2 H(+) = protoporphyrin IX + Fe(2+)</text>
        <dbReference type="Rhea" id="RHEA:22584"/>
        <dbReference type="ChEBI" id="CHEBI:15378"/>
        <dbReference type="ChEBI" id="CHEBI:29033"/>
        <dbReference type="ChEBI" id="CHEBI:57306"/>
        <dbReference type="ChEBI" id="CHEBI:60344"/>
        <dbReference type="EC" id="4.98.1.1"/>
    </reaction>
</comment>
<comment type="pathway">
    <text evidence="1">Porphyrin-containing compound metabolism; protoheme biosynthesis; protoheme from protoporphyrin-IX: step 1/1.</text>
</comment>
<comment type="subcellular location">
    <subcellularLocation>
        <location evidence="1">Cytoplasm</location>
    </subcellularLocation>
</comment>
<comment type="similarity">
    <text evidence="1">Belongs to the ferrochelatase family.</text>
</comment>
<feature type="chain" id="PRO_1000189986" description="Ferrochelatase">
    <location>
        <begin position="1"/>
        <end position="319"/>
    </location>
</feature>
<feature type="binding site" evidence="1">
    <location>
        <position position="192"/>
    </location>
    <ligand>
        <name>Fe cation</name>
        <dbReference type="ChEBI" id="CHEBI:24875"/>
    </ligand>
</feature>
<feature type="binding site" evidence="1">
    <location>
        <position position="271"/>
    </location>
    <ligand>
        <name>Fe cation</name>
        <dbReference type="ChEBI" id="CHEBI:24875"/>
    </ligand>
</feature>
<organism>
    <name type="scientific">Geotalea daltonii (strain DSM 22248 / JCM 15807 / FRC-32)</name>
    <name type="common">Geobacter daltonii</name>
    <dbReference type="NCBI Taxonomy" id="316067"/>
    <lineage>
        <taxon>Bacteria</taxon>
        <taxon>Pseudomonadati</taxon>
        <taxon>Thermodesulfobacteriota</taxon>
        <taxon>Desulfuromonadia</taxon>
        <taxon>Geobacterales</taxon>
        <taxon>Geobacteraceae</taxon>
        <taxon>Geotalea</taxon>
    </lineage>
</organism>
<proteinExistence type="inferred from homology"/>
<gene>
    <name evidence="1" type="primary">hemH</name>
    <name type="ordered locus">Geob_1076</name>
</gene>
<name>HEMH_GEODF</name>
<evidence type="ECO:0000255" key="1">
    <source>
        <dbReference type="HAMAP-Rule" id="MF_00323"/>
    </source>
</evidence>
<accession>B9M326</accession>
<keyword id="KW-0963">Cytoplasm</keyword>
<keyword id="KW-0350">Heme biosynthesis</keyword>
<keyword id="KW-0408">Iron</keyword>
<keyword id="KW-0456">Lyase</keyword>
<keyword id="KW-0479">Metal-binding</keyword>
<keyword id="KW-0627">Porphyrin biosynthesis</keyword>
<keyword id="KW-1185">Reference proteome</keyword>